<dbReference type="EMBL" id="D00329">
    <property type="status" value="NOT_ANNOTATED_CDS"/>
    <property type="molecule type" value="Genomic_DNA"/>
</dbReference>
<dbReference type="PIR" id="G28925">
    <property type="entry name" value="SAVLJ1"/>
</dbReference>
<dbReference type="SMR" id="P17398"/>
<dbReference type="GlyCosmos" id="P17398">
    <property type="glycosylation" value="1 site, No reported glycans"/>
</dbReference>
<dbReference type="Proteomes" id="UP000007913">
    <property type="component" value="Segment"/>
</dbReference>
<dbReference type="GO" id="GO:0016020">
    <property type="term" value="C:membrane"/>
    <property type="evidence" value="ECO:0007669"/>
    <property type="project" value="UniProtKB-UniRule"/>
</dbReference>
<dbReference type="GO" id="GO:0019031">
    <property type="term" value="C:viral envelope"/>
    <property type="evidence" value="ECO:0007669"/>
    <property type="project" value="UniProtKB-KW"/>
</dbReference>
<dbReference type="GO" id="GO:0055036">
    <property type="term" value="C:virion membrane"/>
    <property type="evidence" value="ECO:0007669"/>
    <property type="project" value="UniProtKB-SubCell"/>
</dbReference>
<dbReference type="GO" id="GO:0075513">
    <property type="term" value="P:caveolin-mediated endocytosis of virus by host cell"/>
    <property type="evidence" value="ECO:0007669"/>
    <property type="project" value="UniProtKB-KW"/>
</dbReference>
<dbReference type="GO" id="GO:0039654">
    <property type="term" value="P:fusion of virus membrane with host endosome membrane"/>
    <property type="evidence" value="ECO:0007669"/>
    <property type="project" value="UniProtKB-KW"/>
</dbReference>
<dbReference type="GO" id="GO:0019062">
    <property type="term" value="P:virion attachment to host cell"/>
    <property type="evidence" value="ECO:0007669"/>
    <property type="project" value="UniProtKB-UniRule"/>
</dbReference>
<dbReference type="HAMAP" id="MF_04075">
    <property type="entry name" value="HBV_HBSAG"/>
    <property type="match status" value="1"/>
</dbReference>
<dbReference type="InterPro" id="IPR000349">
    <property type="entry name" value="HBV_HBSAG"/>
</dbReference>
<dbReference type="Pfam" id="PF00695">
    <property type="entry name" value="vMSA"/>
    <property type="match status" value="1"/>
</dbReference>
<comment type="function">
    <text evidence="4">The large envelope protein exists in two topological conformations, one which is termed 'external' or Le-HBsAg and the other 'internal' or Li-HBsAg. In its external conformation the protein attaches the virus to cell receptors and thereby initiating infection. This interaction determines the species specificity and liver tropism. This attachment induces virion internalization predominantly through caveolin-mediated endocytosis. The large envelope protein also assures fusion between virion membrane and endosomal membrane. In its internal conformation the protein plays a role in virion morphogenesis and mediates the contact with the nucleocapsid like a matrix protein.</text>
</comment>
<comment type="function">
    <text evidence="4">The middle envelope protein plays an important role in the budding of the virion. It is involved in the induction of budding in a nucleocapsid independent way. In this process the majority of envelope proteins bud to form subviral lipoprotein particles of 22 nm of diameter that do not contain a nucleocapsid.</text>
</comment>
<comment type="subunit">
    <text evidence="3">Interacts (via its myristoylated pre-S1 region) with the host SLC10A1/NTCP; this interaction is essential for viral entry.</text>
</comment>
<comment type="subunit">
    <molecule>Isoform L</molecule>
    <text evidence="2">In its internal form (Li-HBsAg), interacts with the capsid protein and with the isoform S. Interacts with host chaperone CANX.</text>
</comment>
<comment type="subunit">
    <molecule>Isoform M</molecule>
    <text evidence="2">Associates with host chaperone CANX through its pre-S2 N glycan; this association may be essential for isoform M proper secretion.</text>
</comment>
<comment type="subunit">
    <molecule>Isoform S</molecule>
    <text evidence="2">Interacts with isoform L. Interacts with the antigens of satellite virus HDV (HDVAgs); this interaction is required for encapsidation of HDV genomic RNA.</text>
</comment>
<comment type="subcellular location">
    <subcellularLocation>
        <location evidence="4">Virion membrane</location>
    </subcellularLocation>
</comment>
<comment type="alternative products">
    <event type="alternative splicing"/>
    <event type="alternative initiation"/>
    <isoform>
        <id>P17398-1</id>
        <name>L</name>
        <name>Large envelope protein</name>
        <name>LHB</name>
        <name>L-HBsAg</name>
        <sequence type="displayed"/>
    </isoform>
    <isoform>
        <id>P17398-2</id>
        <name>M</name>
        <name>Middle envelope protein</name>
        <name>MHB</name>
        <name>M-HBsAg</name>
        <sequence type="described" ref="VSP_031368"/>
    </isoform>
    <isoform>
        <id>P17398-3</id>
        <name>S</name>
        <name>Small envelope protein</name>
        <name>SHB</name>
        <name>S-HBsAg</name>
        <sequence type="described" ref="VSP_031367"/>
    </isoform>
</comment>
<comment type="domain">
    <text evidence="4">The large envelope protein is synthesized with the pre-S region at the cytosolic side of the endoplasmic reticulum and, hence will be within the virion after budding. Therefore the pre-S region is not N-glycosylated. Later a post-translational translocation of N-terminal pre-S and TM1 domains occur in about 50% of proteins at the virion surface. These molecules change their topology by an unknown mechanism, resulting in exposure of pre-S region at virion surface. For isoform M in contrast, the pre-S2 region is translocated cotranslationally to the endoplasmic reticulum lumen and is N-glycosylated.</text>
</comment>
<comment type="PTM">
    <text evidence="1 4">Isoform M is N-terminally acetylated by host at a ratio of 90%, and N-glycosylated by host at the pre-S2 region.</text>
</comment>
<comment type="PTM">
    <text evidence="3 4">Myristoylated; this modification is essential for its interaction with the host protein SLC10A1/NTCP.</text>
</comment>
<comment type="biotechnology">
    <text>Systematic vaccination of individuals at risk of exposure to the virus has been the main method of controlling the morbidity and mortality associated with hepatitis B. The first hepatitis B vaccine was manufactured by the purification and inactivation of HBsAg obtained from the plasma of chronic hepatitis B virus carriers. The vaccine is now produced by recombinant DNA techniques and expression of the S isoform in yeast cells. The pre-S region do not seem to induce strong enough antigenic response.</text>
</comment>
<comment type="similarity">
    <text evidence="4">Belongs to the orthohepadnavirus major surface antigen family.</text>
</comment>
<sequence>MGTNLSVPNPLGFFPDHQLDPAFKANSENPDWDLNPHKDNWPDAHKVGVGAFGPGFTPPHGGLLGWSPQAQGILTSVPAAPPPASTNRQSGRQPTPLSPPLRDTHPQAMQWNSTTFHQTLQDPRVRALYFPAGGSSSGTVSPAQNTVSAISSILSKTGDPVPNMENIASGLLGPLLVLQAGFFLLTKILTIPQSLDSWWTSLNFLGGTPVCLGQNSQSQISSHSPTCCPPICPGYRWMCLRRFIIFLCILLLCLIFLLVLLDYQGMLPVCPLIPGSSTTSTGPCKTCTTPAQGTSMFPSCCCTKPMDGNCTCIPIPSSWAFAKYLWEWASVRFSWLSLLVPFVQWFVGLSPTVWLSVIWMMWYWGPSLYNILSPFMPLLPIFFCLWVYI</sequence>
<name>HBSAG_HBVB1</name>
<evidence type="ECO:0000250" key="1">
    <source>
        <dbReference type="UniProtKB" id="P03138"/>
    </source>
</evidence>
<evidence type="ECO:0000250" key="2">
    <source>
        <dbReference type="UniProtKB" id="P03141"/>
    </source>
</evidence>
<evidence type="ECO:0000250" key="3">
    <source>
        <dbReference type="UniProtKB" id="Q9PWW3"/>
    </source>
</evidence>
<evidence type="ECO:0000255" key="4">
    <source>
        <dbReference type="HAMAP-Rule" id="MF_04075"/>
    </source>
</evidence>
<evidence type="ECO:0000256" key="5">
    <source>
        <dbReference type="SAM" id="MobiDB-lite"/>
    </source>
</evidence>
<evidence type="ECO:0000305" key="6"/>
<keyword id="KW-0007">Acetylation</keyword>
<keyword id="KW-0024">Alternative initiation</keyword>
<keyword id="KW-0025">Alternative splicing</keyword>
<keyword id="KW-1166">Caveolin-mediated endocytosis of virus by host</keyword>
<keyword id="KW-1170">Fusion of virus membrane with host endosomal membrane</keyword>
<keyword id="KW-1168">Fusion of virus membrane with host membrane</keyword>
<keyword id="KW-0325">Glycoprotein</keyword>
<keyword id="KW-0945">Host-virus interaction</keyword>
<keyword id="KW-0449">Lipoprotein</keyword>
<keyword id="KW-0472">Membrane</keyword>
<keyword id="KW-0519">Myristate</keyword>
<keyword id="KW-0812">Transmembrane</keyword>
<keyword id="KW-1133">Transmembrane helix</keyword>
<keyword id="KW-1161">Viral attachment to host cell</keyword>
<keyword id="KW-0261">Viral envelope protein</keyword>
<keyword id="KW-1162">Viral penetration into host cytoplasm</keyword>
<keyword id="KW-0946">Virion</keyword>
<keyword id="KW-1164">Virus endocytosis by host</keyword>
<keyword id="KW-1160">Virus entry into host cell</keyword>
<organism>
    <name type="scientific">Hepatitis B virus genotype B1 subtype adw (isolate Japan/pJDW233/1988)</name>
    <name type="common">HBV-B</name>
    <dbReference type="NCBI Taxonomy" id="10413"/>
    <lineage>
        <taxon>Viruses</taxon>
        <taxon>Riboviria</taxon>
        <taxon>Pararnavirae</taxon>
        <taxon>Artverviricota</taxon>
        <taxon>Revtraviricetes</taxon>
        <taxon>Blubervirales</taxon>
        <taxon>Hepadnaviridae</taxon>
        <taxon>Orthohepadnavirus</taxon>
        <taxon>Hepatitis B virus</taxon>
    </lineage>
</organism>
<gene>
    <name evidence="4" type="primary">S</name>
</gene>
<organismHost>
    <name type="scientific">Homo sapiens</name>
    <name type="common">Human</name>
    <dbReference type="NCBI Taxonomy" id="9606"/>
</organismHost>
<organismHost>
    <name type="scientific">Pan troglodytes</name>
    <name type="common">Chimpanzee</name>
    <dbReference type="NCBI Taxonomy" id="9598"/>
</organismHost>
<feature type="initiator methionine" description="Removed; by host" evidence="4">
    <location>
        <position position="1"/>
    </location>
</feature>
<feature type="chain" id="PRO_0000038101" description="Large envelope protein" evidence="4">
    <location>
        <begin position="2"/>
        <end position="389"/>
    </location>
</feature>
<feature type="topological domain" description="Intravirion; in internal conformation" evidence="4">
    <location>
        <begin position="2"/>
        <end position="242"/>
    </location>
</feature>
<feature type="topological domain" description="Virion surface; in external conformation" evidence="4">
    <location>
        <begin position="2"/>
        <end position="170"/>
    </location>
</feature>
<feature type="transmembrane region" description="Helical; Name=TM1; Note=In external conformation" evidence="4">
    <location>
        <begin position="171"/>
        <end position="191"/>
    </location>
</feature>
<feature type="topological domain" description="Intravirion; in external conformation" evidence="4">
    <location>
        <begin position="192"/>
        <end position="242"/>
    </location>
</feature>
<feature type="transmembrane region" description="Helical; Name=TM2" evidence="4">
    <location>
        <begin position="243"/>
        <end position="263"/>
    </location>
</feature>
<feature type="topological domain" description="Virion surface" evidence="4">
    <location>
        <begin position="264"/>
        <end position="337"/>
    </location>
</feature>
<feature type="transmembrane region" description="Helical" evidence="4">
    <location>
        <begin position="338"/>
        <end position="358"/>
    </location>
</feature>
<feature type="topological domain" description="Intravirion" evidence="4">
    <location>
        <begin position="359"/>
        <end position="364"/>
    </location>
</feature>
<feature type="transmembrane region" description="Helical; Name=TM3" evidence="4">
    <location>
        <begin position="365"/>
        <end position="387"/>
    </location>
</feature>
<feature type="topological domain" description="Virion surface" evidence="4">
    <location>
        <begin position="388"/>
        <end position="389"/>
    </location>
</feature>
<feature type="region of interest" description="Pre-S" evidence="4">
    <location>
        <begin position="2"/>
        <end position="163"/>
    </location>
</feature>
<feature type="region of interest" description="Pre-S1" evidence="4">
    <location>
        <begin position="2"/>
        <end position="108"/>
    </location>
</feature>
<feature type="region of interest" description="Disordered" evidence="5">
    <location>
        <begin position="73"/>
        <end position="107"/>
    </location>
</feature>
<feature type="region of interest" description="Pre-S2" evidence="4">
    <location>
        <begin position="109"/>
        <end position="163"/>
    </location>
</feature>
<feature type="compositionally biased region" description="Polar residues" evidence="5">
    <location>
        <begin position="85"/>
        <end position="95"/>
    </location>
</feature>
<feature type="lipid moiety-binding region" description="N-myristoyl glycine; by host" evidence="4">
    <location>
        <position position="2"/>
    </location>
</feature>
<feature type="glycosylation site" description="N-linked (GlcNAc...) asparagine; by host" evidence="4">
    <location>
        <position position="309"/>
    </location>
</feature>
<feature type="splice variant" id="VSP_031367" description="In isoform S." evidence="6">
    <location>
        <begin position="1"/>
        <end position="163"/>
    </location>
</feature>
<feature type="splice variant" id="VSP_031368" description="In isoform M." evidence="6">
    <location>
        <begin position="1"/>
        <end position="108"/>
    </location>
</feature>
<feature type="modified residue" description="N-acetylmethionine" evidence="1">
    <location sequence="P17398-2">
        <position position="1"/>
    </location>
</feature>
<accession>P17398</accession>
<proteinExistence type="evidence at protein level"/>
<reference key="1">
    <citation type="journal article" date="1988" name="J. Gen. Virol.">
        <title>Typing hepatitis B virus by homology in nucleotide sequence: comparison of surface antigen subtypes.</title>
        <authorList>
            <person name="Okamoto H."/>
            <person name="Tsuda F."/>
            <person name="Sakugawa H."/>
            <person name="Sastrosoewignjo R.I."/>
            <person name="Imai M."/>
            <person name="Miyakawa Y."/>
            <person name="Mayumi M."/>
        </authorList>
    </citation>
    <scope>NUCLEOTIDE SEQUENCE [GENOMIC DNA]</scope>
</reference>
<reference key="2">
    <citation type="journal article" date="1996" name="Intervirology">
        <title>Functions of the large hepatitis B virus surface protein in viral particle morphogenesis.</title>
        <authorList>
            <person name="Bruss V."/>
            <person name="Gerhardt E."/>
            <person name="Vieluf K."/>
            <person name="Wunderlich G."/>
        </authorList>
    </citation>
    <scope>REVIEW</scope>
</reference>
<reference key="3">
    <citation type="journal article" date="1998" name="Adv. Exp. Med. Biol.">
        <title>Role of glycan processing in hepatitis B virus envelope protein trafficking.</title>
        <authorList>
            <person name="Block T.M."/>
            <person name="Lu X."/>
            <person name="Mehta A."/>
            <person name="Park J."/>
            <person name="Blumberg B.S."/>
            <person name="Dwek R."/>
        </authorList>
    </citation>
    <scope>REVIEW</scope>
</reference>
<reference key="4">
    <citation type="journal article" date="2004" name="Virus Res.">
        <title>Envelopment of the hepatitis B virus nucleocapsid.</title>
        <authorList>
            <person name="Bruss V."/>
        </authorList>
    </citation>
    <scope>REVIEW</scope>
</reference>
<reference key="5">
    <citation type="journal article" date="2006" name="Cancer Sci.">
        <title>Hepatitis B virus pre-S mutants, endoplasmic reticulum stress and hepatocarcinogenesis.</title>
        <authorList>
            <person name="Wang H.C."/>
            <person name="Huang W."/>
            <person name="Lai M.D."/>
            <person name="Su I.J."/>
        </authorList>
    </citation>
    <scope>REVIEW</scope>
</reference>
<protein>
    <recommendedName>
        <fullName evidence="4">Large envelope protein</fullName>
    </recommendedName>
    <alternativeName>
        <fullName evidence="4">L glycoprotein</fullName>
    </alternativeName>
    <alternativeName>
        <fullName evidence="4">L-HBsAg</fullName>
        <shortName evidence="4">LHB</shortName>
    </alternativeName>
    <alternativeName>
        <fullName evidence="4">Large S protein</fullName>
    </alternativeName>
    <alternativeName>
        <fullName evidence="4">Large surface protein</fullName>
    </alternativeName>
    <alternativeName>
        <fullName evidence="4">Major surface antigen</fullName>
    </alternativeName>
</protein>